<feature type="chain" id="PRO_0000112857" description="Auxin-responsive protein IAA31">
    <location>
        <begin position="1"/>
        <end position="158"/>
    </location>
</feature>
<feature type="domain" description="PB1" evidence="2">
    <location>
        <begin position="72"/>
        <end position="157"/>
    </location>
</feature>
<feature type="region of interest" description="Disordered" evidence="3">
    <location>
        <begin position="1"/>
        <end position="49"/>
    </location>
</feature>
<feature type="short sequence motif" description="EAR-like (transcriptional repression)">
    <location>
        <begin position="29"/>
        <end position="33"/>
    </location>
</feature>
<feature type="compositionally biased region" description="Low complexity" evidence="3">
    <location>
        <begin position="1"/>
        <end position="40"/>
    </location>
</feature>
<feature type="sequence conflict" description="In Ref. 3; AAN18112." evidence="5" ref="3">
    <original>T</original>
    <variation>P</variation>
    <location>
        <position position="153"/>
    </location>
</feature>
<accession>Q8H174</accession>
<accession>Q9LUN7</accession>
<dbReference type="EMBL" id="AB022219">
    <property type="protein sequence ID" value="BAB02050.1"/>
    <property type="molecule type" value="Genomic_DNA"/>
</dbReference>
<dbReference type="EMBL" id="CP002686">
    <property type="protein sequence ID" value="AEE75973.1"/>
    <property type="molecule type" value="Genomic_DNA"/>
</dbReference>
<dbReference type="EMBL" id="AY054274">
    <property type="protein sequence ID" value="AAL06933.1"/>
    <property type="molecule type" value="mRNA"/>
</dbReference>
<dbReference type="EMBL" id="BT000543">
    <property type="protein sequence ID" value="AAN18112.1"/>
    <property type="molecule type" value="mRNA"/>
</dbReference>
<dbReference type="RefSeq" id="NP_188387.1">
    <property type="nucleotide sequence ID" value="NM_112640.5"/>
</dbReference>
<dbReference type="SMR" id="Q8H174"/>
<dbReference type="BioGRID" id="6359">
    <property type="interactions" value="57"/>
</dbReference>
<dbReference type="FunCoup" id="Q8H174">
    <property type="interactions" value="291"/>
</dbReference>
<dbReference type="IntAct" id="Q8H174">
    <property type="interactions" value="46"/>
</dbReference>
<dbReference type="STRING" id="3702.Q8H174"/>
<dbReference type="PaxDb" id="3702-AT3G17600.1"/>
<dbReference type="EnsemblPlants" id="AT3G17600.1">
    <property type="protein sequence ID" value="AT3G17600.1"/>
    <property type="gene ID" value="AT3G17600"/>
</dbReference>
<dbReference type="GeneID" id="821026"/>
<dbReference type="Gramene" id="AT3G17600.1">
    <property type="protein sequence ID" value="AT3G17600.1"/>
    <property type="gene ID" value="AT3G17600"/>
</dbReference>
<dbReference type="KEGG" id="ath:AT3G17600"/>
<dbReference type="Araport" id="AT3G17600"/>
<dbReference type="TAIR" id="AT3G17600">
    <property type="gene designation" value="IAA31"/>
</dbReference>
<dbReference type="eggNOG" id="ENOG502S04C">
    <property type="taxonomic scope" value="Eukaryota"/>
</dbReference>
<dbReference type="HOGENOM" id="CLU_049393_3_1_1"/>
<dbReference type="InParanoid" id="Q8H174"/>
<dbReference type="OMA" id="HMFRTTI"/>
<dbReference type="OrthoDB" id="652411at2759"/>
<dbReference type="PhylomeDB" id="Q8H174"/>
<dbReference type="PRO" id="PR:Q8H174"/>
<dbReference type="Proteomes" id="UP000006548">
    <property type="component" value="Chromosome 3"/>
</dbReference>
<dbReference type="ExpressionAtlas" id="Q8H174">
    <property type="expression patterns" value="baseline and differential"/>
</dbReference>
<dbReference type="GO" id="GO:0005634">
    <property type="term" value="C:nucleus"/>
    <property type="evidence" value="ECO:0007669"/>
    <property type="project" value="UniProtKB-SubCell"/>
</dbReference>
<dbReference type="GO" id="GO:0003700">
    <property type="term" value="F:DNA-binding transcription factor activity"/>
    <property type="evidence" value="ECO:0000250"/>
    <property type="project" value="TAIR"/>
</dbReference>
<dbReference type="GO" id="GO:0042802">
    <property type="term" value="F:identical protein binding"/>
    <property type="evidence" value="ECO:0000353"/>
    <property type="project" value="IntAct"/>
</dbReference>
<dbReference type="GO" id="GO:0000976">
    <property type="term" value="F:transcription cis-regulatory region binding"/>
    <property type="evidence" value="ECO:0000353"/>
    <property type="project" value="TAIR"/>
</dbReference>
<dbReference type="GO" id="GO:0009734">
    <property type="term" value="P:auxin-activated signaling pathway"/>
    <property type="evidence" value="ECO:0007669"/>
    <property type="project" value="UniProtKB-KW"/>
</dbReference>
<dbReference type="GO" id="GO:0009630">
    <property type="term" value="P:gravitropism"/>
    <property type="evidence" value="ECO:0000315"/>
    <property type="project" value="TAIR"/>
</dbReference>
<dbReference type="GO" id="GO:0009733">
    <property type="term" value="P:response to auxin"/>
    <property type="evidence" value="ECO:0000304"/>
    <property type="project" value="TAIR"/>
</dbReference>
<dbReference type="GO" id="GO:0048364">
    <property type="term" value="P:root development"/>
    <property type="evidence" value="ECO:0000315"/>
    <property type="project" value="TAIR"/>
</dbReference>
<dbReference type="GO" id="GO:0048367">
    <property type="term" value="P:shoot system development"/>
    <property type="evidence" value="ECO:0000315"/>
    <property type="project" value="TAIR"/>
</dbReference>
<dbReference type="FunFam" id="3.10.20.90:FF:000247">
    <property type="entry name" value="Auxin-responsive protein"/>
    <property type="match status" value="1"/>
</dbReference>
<dbReference type="Gene3D" id="3.10.20.90">
    <property type="entry name" value="Phosphatidylinositol 3-kinase Catalytic Subunit, Chain A, domain 1"/>
    <property type="match status" value="1"/>
</dbReference>
<dbReference type="InterPro" id="IPR033389">
    <property type="entry name" value="AUX/IAA_dom"/>
</dbReference>
<dbReference type="InterPro" id="IPR003311">
    <property type="entry name" value="AUX_IAA"/>
</dbReference>
<dbReference type="InterPro" id="IPR053793">
    <property type="entry name" value="PB1-like"/>
</dbReference>
<dbReference type="PANTHER" id="PTHR31734">
    <property type="entry name" value="AUXIN-RESPONSIVE PROTEIN IAA17"/>
    <property type="match status" value="1"/>
</dbReference>
<dbReference type="PANTHER" id="PTHR31734:SF216">
    <property type="entry name" value="AUXIN-RESPONSIVE PROTEIN IAA31"/>
    <property type="match status" value="1"/>
</dbReference>
<dbReference type="Pfam" id="PF02309">
    <property type="entry name" value="AUX_IAA"/>
    <property type="match status" value="1"/>
</dbReference>
<dbReference type="SUPFAM" id="SSF54277">
    <property type="entry name" value="CAD &amp; PB1 domains"/>
    <property type="match status" value="1"/>
</dbReference>
<dbReference type="PROSITE" id="PS51745">
    <property type="entry name" value="PB1"/>
    <property type="match status" value="1"/>
</dbReference>
<keyword id="KW-0927">Auxin signaling pathway</keyword>
<keyword id="KW-0539">Nucleus</keyword>
<keyword id="KW-1185">Reference proteome</keyword>
<keyword id="KW-0678">Repressor</keyword>
<keyword id="KW-0804">Transcription</keyword>
<keyword id="KW-0805">Transcription regulation</keyword>
<name>IAA31_ARATH</name>
<comment type="function">
    <text evidence="4">Aux/IAA proteins are short-lived transcriptional factors that function as repressors of early auxin response genes at low auxin concentrations. Repression is thought to result from the interaction with auxin response factors (ARFs), proteins that bind to the auxin-responsive promoter element (AuxRE). Formation of heterodimers with ARF proteins may alter their ability to modulate early auxin response genes expression.</text>
</comment>
<comment type="subunit">
    <text evidence="1">Homodimers and heterodimers.</text>
</comment>
<comment type="interaction">
    <interactant intactId="EBI-3946408">
        <id>Q8H174</id>
    </interactant>
    <interactant intactId="EBI-3947482">
        <id>Q9SKN5</id>
        <label>ARF10</label>
    </interactant>
    <organismsDiffer>false</organismsDiffer>
    <experiments>3</experiments>
</comment>
<comment type="interaction">
    <interactant intactId="EBI-3946408">
        <id>Q8H174</id>
    </interactant>
    <interactant intactId="EBI-3947588">
        <id>Q93YR9</id>
        <label>ARF16</label>
    </interactant>
    <organismsDiffer>false</organismsDiffer>
    <experiments>10</experiments>
</comment>
<comment type="interaction">
    <interactant intactId="EBI-3946408">
        <id>Q8H174</id>
    </interactant>
    <interactant intactId="EBI-1100737">
        <id>Q8L9Y3</id>
        <label>ARR14</label>
    </interactant>
    <organismsDiffer>false</organismsDiffer>
    <experiments>3</experiments>
</comment>
<comment type="interaction">
    <interactant intactId="EBI-3946408">
        <id>Q8H174</id>
    </interactant>
    <interactant intactId="EBI-15192745">
        <id>Q9LST3</id>
        <label>At5g60142</label>
    </interactant>
    <organismsDiffer>false</organismsDiffer>
    <experiments>3</experiments>
</comment>
<comment type="interaction">
    <interactant intactId="EBI-3946408">
        <id>Q8H174</id>
    </interactant>
    <interactant intactId="EBI-4453230">
        <id>O80902</id>
        <label>CIPK22</label>
    </interactant>
    <organismsDiffer>false</organismsDiffer>
    <experiments>3</experiments>
</comment>
<comment type="interaction">
    <interactant intactId="EBI-3946408">
        <id>Q8H174</id>
    </interactant>
    <interactant intactId="EBI-3946434">
        <id>Q38828</id>
        <label>IAA10</label>
    </interactant>
    <organismsDiffer>false</organismsDiffer>
    <experiments>8</experiments>
</comment>
<comment type="interaction">
    <interactant intactId="EBI-3946408">
        <id>Q8H174</id>
    </interactant>
    <interactant intactId="EBI-2367923">
        <id>Q38829</id>
        <label>IAA11</label>
    </interactant>
    <organismsDiffer>false</organismsDiffer>
    <experiments>8</experiments>
</comment>
<comment type="interaction">
    <interactant intactId="EBI-3946408">
        <id>Q8H174</id>
    </interactant>
    <interactant intactId="EBI-617608">
        <id>Q38830</id>
        <label>IAA12</label>
    </interactant>
    <organismsDiffer>false</organismsDiffer>
    <experiments>8</experiments>
</comment>
<comment type="interaction">
    <interactant intactId="EBI-3946408">
        <id>Q8H174</id>
    </interactant>
    <interactant intactId="EBI-1554143">
        <id>Q38831</id>
        <label>IAA13</label>
    </interactant>
    <organismsDiffer>false</organismsDiffer>
    <experiments>9</experiments>
</comment>
<comment type="interaction">
    <interactant intactId="EBI-3946408">
        <id>Q8H174</id>
    </interactant>
    <interactant intactId="EBI-2295562">
        <id>Q38832</id>
        <label>IAA14</label>
    </interactant>
    <organismsDiffer>false</organismsDiffer>
    <experiments>3</experiments>
</comment>
<comment type="interaction">
    <interactant intactId="EBI-3946408">
        <id>Q8H174</id>
    </interactant>
    <interactant intactId="EBI-25524519">
        <id>A0A2H1ZEF6</id>
        <label>IAA15</label>
    </interactant>
    <organismsDiffer>false</organismsDiffer>
    <experiments>3</experiments>
</comment>
<comment type="interaction">
    <interactant intactId="EBI-3946408">
        <id>Q8H174</id>
    </interactant>
    <interactant intactId="EBI-632231">
        <id>O24407</id>
        <label>IAA16</label>
    </interactant>
    <organismsDiffer>false</organismsDiffer>
    <experiments>7</experiments>
</comment>
<comment type="interaction">
    <interactant intactId="EBI-3946408">
        <id>Q8H174</id>
    </interactant>
    <interactant intactId="EBI-632243">
        <id>P93830</id>
        <label>IAA17</label>
    </interactant>
    <organismsDiffer>false</organismsDiffer>
    <experiments>8</experiments>
</comment>
<comment type="interaction">
    <interactant intactId="EBI-3946408">
        <id>Q8H174</id>
    </interactant>
    <interactant intactId="EBI-2295525">
        <id>O24408</id>
        <label>IAA18</label>
    </interactant>
    <organismsDiffer>false</organismsDiffer>
    <experiments>5</experiments>
</comment>
<comment type="interaction">
    <interactant intactId="EBI-3946408">
        <id>Q8H174</id>
    </interactant>
    <interactant intactId="EBI-632257">
        <id>O24409</id>
        <label>IAA19</label>
    </interactant>
    <organismsDiffer>false</organismsDiffer>
    <experiments>11</experiments>
</comment>
<comment type="interaction">
    <interactant intactId="EBI-3946408">
        <id>Q8H174</id>
    </interactant>
    <interactant intactId="EBI-632272">
        <id>O24410</id>
        <label>IAA20</label>
    </interactant>
    <organismsDiffer>false</organismsDiffer>
    <experiments>5</experiments>
</comment>
<comment type="interaction">
    <interactant intactId="EBI-3946408">
        <id>Q8H174</id>
    </interactant>
    <interactant intactId="EBI-3947418">
        <id>Q8LAL2</id>
        <label>IAA26</label>
    </interactant>
    <organismsDiffer>false</organismsDiffer>
    <experiments>5</experiments>
</comment>
<comment type="interaction">
    <interactant intactId="EBI-3946408">
        <id>Q8H174</id>
    </interactant>
    <interactant intactId="EBI-3946677">
        <id>Q9ZSY8</id>
        <label>IAA27</label>
    </interactant>
    <organismsDiffer>false</organismsDiffer>
    <experiments>9</experiments>
</comment>
<comment type="interaction">
    <interactant intactId="EBI-3946408">
        <id>Q8H174</id>
    </interactant>
    <interactant intactId="EBI-3133404">
        <id>Q9XFM0</id>
        <label>IAA28</label>
    </interactant>
    <organismsDiffer>false</organismsDiffer>
    <experiments>8</experiments>
</comment>
<comment type="interaction">
    <interactant intactId="EBI-3946408">
        <id>Q8H174</id>
    </interactant>
    <interactant intactId="EBI-307174">
        <id>Q38822</id>
        <label>IAA3</label>
    </interactant>
    <organismsDiffer>false</organismsDiffer>
    <experiments>10</experiments>
</comment>
<comment type="interaction">
    <interactant intactId="EBI-3946408">
        <id>Q8H174</id>
    </interactant>
    <interactant intactId="EBI-3946408">
        <id>Q8H174</id>
        <label>IAA31</label>
    </interactant>
    <organismsDiffer>false</organismsDiffer>
    <experiments>4</experiments>
</comment>
<comment type="interaction">
    <interactant intactId="EBI-3946408">
        <id>Q8H174</id>
    </interactant>
    <interactant intactId="EBI-3946448">
        <id>Q8RYC6</id>
        <label>IAA32</label>
    </interactant>
    <organismsDiffer>false</organismsDiffer>
    <experiments>3</experiments>
</comment>
<comment type="interaction">
    <interactant intactId="EBI-3946408">
        <id>Q8H174</id>
    </interactant>
    <interactant intactId="EBI-3946739">
        <id>Q9FKM7</id>
        <label>IAA33</label>
    </interactant>
    <organismsDiffer>false</organismsDiffer>
    <experiments>6</experiments>
</comment>
<comment type="interaction">
    <interactant intactId="EBI-3946408">
        <id>Q8H174</id>
    </interactant>
    <interactant intactId="EBI-3946459">
        <id>Q9C5X0</id>
        <label>IAA34</label>
    </interactant>
    <organismsDiffer>false</organismsDiffer>
    <experiments>8</experiments>
</comment>
<comment type="interaction">
    <interactant intactId="EBI-3946408">
        <id>Q8H174</id>
    </interactant>
    <interactant intactId="EBI-632187">
        <id>P33077</id>
        <label>IAA4</label>
    </interactant>
    <organismsDiffer>false</organismsDiffer>
    <experiments>3</experiments>
</comment>
<comment type="interaction">
    <interactant intactId="EBI-3946408">
        <id>Q8H174</id>
    </interactant>
    <interactant intactId="EBI-3946487">
        <id>P33078</id>
        <label>IAA5</label>
    </interactant>
    <organismsDiffer>false</organismsDiffer>
    <experiments>6</experiments>
</comment>
<comment type="interaction">
    <interactant intactId="EBI-3946408">
        <id>Q8H174</id>
    </interactant>
    <interactant intactId="EBI-1554124">
        <id>Q38824</id>
        <label>IAA6</label>
    </interactant>
    <organismsDiffer>false</organismsDiffer>
    <experiments>9</experiments>
</comment>
<comment type="interaction">
    <interactant intactId="EBI-3946408">
        <id>Q8H174</id>
    </interactant>
    <interactant intactId="EBI-632216">
        <id>Q38827</id>
        <label>IAA9</label>
    </interactant>
    <organismsDiffer>false</organismsDiffer>
    <experiments>3</experiments>
</comment>
<comment type="interaction">
    <interactant intactId="EBI-3946408">
        <id>Q8H174</id>
    </interactant>
    <interactant intactId="EBI-25506855">
        <id>O23160</id>
        <label>MYB73</label>
    </interactant>
    <organismsDiffer>false</organismsDiffer>
    <experiments>3</experiments>
</comment>
<comment type="interaction">
    <interactant intactId="EBI-3946408">
        <id>Q8H174</id>
    </interactant>
    <interactant intactId="EBI-15216492">
        <id>Q9MAN1</id>
        <label>NGA3</label>
    </interactant>
    <organismsDiffer>false</organismsDiffer>
    <experiments>3</experiments>
</comment>
<comment type="interaction">
    <interactant intactId="EBI-3946408">
        <id>Q8H174</id>
    </interactant>
    <interactant intactId="EBI-2429535">
        <id>Q9FGM1</id>
        <label>PYL8</label>
    </interactant>
    <organismsDiffer>false</organismsDiffer>
    <experiments>3</experiments>
</comment>
<comment type="subcellular location">
    <subcellularLocation>
        <location evidence="1">Nucleus</location>
    </subcellularLocation>
</comment>
<comment type="induction">
    <text evidence="1">By auxin.</text>
</comment>
<comment type="domain">
    <text>The N-terminal half of the protein contains two conserved domains I and II. Domain I includes a slightly degenerated ERF-associated amphiphilic repression (EAR) motif which seems to be involved in the activity of transcriptional repression. Domain II is required for the correct degradation of the protein through the SCF-mediated ubiquitin-proteasome pathway. Interactions between Aux/IAA proteins and auxin response factors (ARFs) occur through their C-terminal dimerization domains III and IV.</text>
</comment>
<comment type="similarity">
    <text evidence="5">Belongs to the Aux/IAA family.</text>
</comment>
<evidence type="ECO:0000250" key="1"/>
<evidence type="ECO:0000255" key="2">
    <source>
        <dbReference type="PROSITE-ProRule" id="PRU01081"/>
    </source>
</evidence>
<evidence type="ECO:0000256" key="3">
    <source>
        <dbReference type="SAM" id="MobiDB-lite"/>
    </source>
</evidence>
<evidence type="ECO:0000269" key="4">
    <source>
    </source>
</evidence>
<evidence type="ECO:0000305" key="5"/>
<reference key="1">
    <citation type="journal article" date="2000" name="DNA Res.">
        <title>Structural analysis of Arabidopsis thaliana chromosome 3. I. Sequence features of the regions of 4,504,864 bp covered by sixty P1 and TAC clones.</title>
        <authorList>
            <person name="Sato S."/>
            <person name="Nakamura Y."/>
            <person name="Kaneko T."/>
            <person name="Katoh T."/>
            <person name="Asamizu E."/>
            <person name="Tabata S."/>
        </authorList>
    </citation>
    <scope>NUCLEOTIDE SEQUENCE [LARGE SCALE GENOMIC DNA]</scope>
    <source>
        <strain>cv. Columbia</strain>
    </source>
</reference>
<reference key="2">
    <citation type="journal article" date="2017" name="Plant J.">
        <title>Araport11: a complete reannotation of the Arabidopsis thaliana reference genome.</title>
        <authorList>
            <person name="Cheng C.Y."/>
            <person name="Krishnakumar V."/>
            <person name="Chan A.P."/>
            <person name="Thibaud-Nissen F."/>
            <person name="Schobel S."/>
            <person name="Town C.D."/>
        </authorList>
    </citation>
    <scope>GENOME REANNOTATION</scope>
    <source>
        <strain>cv. Columbia</strain>
    </source>
</reference>
<reference key="3">
    <citation type="journal article" date="2003" name="Science">
        <title>Empirical analysis of transcriptional activity in the Arabidopsis genome.</title>
        <authorList>
            <person name="Yamada K."/>
            <person name="Lim J."/>
            <person name="Dale J.M."/>
            <person name="Chen H."/>
            <person name="Shinn P."/>
            <person name="Palm C.J."/>
            <person name="Southwick A.M."/>
            <person name="Wu H.C."/>
            <person name="Kim C.J."/>
            <person name="Nguyen M."/>
            <person name="Pham P.K."/>
            <person name="Cheuk R.F."/>
            <person name="Karlin-Newmann G."/>
            <person name="Liu S.X."/>
            <person name="Lam B."/>
            <person name="Sakano H."/>
            <person name="Wu T."/>
            <person name="Yu G."/>
            <person name="Miranda M."/>
            <person name="Quach H.L."/>
            <person name="Tripp M."/>
            <person name="Chang C.H."/>
            <person name="Lee J.M."/>
            <person name="Toriumi M.J."/>
            <person name="Chan M.M."/>
            <person name="Tang C.C."/>
            <person name="Onodera C.S."/>
            <person name="Deng J.M."/>
            <person name="Akiyama K."/>
            <person name="Ansari Y."/>
            <person name="Arakawa T."/>
            <person name="Banh J."/>
            <person name="Banno F."/>
            <person name="Bowser L."/>
            <person name="Brooks S.Y."/>
            <person name="Carninci P."/>
            <person name="Chao Q."/>
            <person name="Choy N."/>
            <person name="Enju A."/>
            <person name="Goldsmith A.D."/>
            <person name="Gurjal M."/>
            <person name="Hansen N.F."/>
            <person name="Hayashizaki Y."/>
            <person name="Johnson-Hopson C."/>
            <person name="Hsuan V.W."/>
            <person name="Iida K."/>
            <person name="Karnes M."/>
            <person name="Khan S."/>
            <person name="Koesema E."/>
            <person name="Ishida J."/>
            <person name="Jiang P.X."/>
            <person name="Jones T."/>
            <person name="Kawai J."/>
            <person name="Kamiya A."/>
            <person name="Meyers C."/>
            <person name="Nakajima M."/>
            <person name="Narusaka M."/>
            <person name="Seki M."/>
            <person name="Sakurai T."/>
            <person name="Satou M."/>
            <person name="Tamse R."/>
            <person name="Vaysberg M."/>
            <person name="Wallender E.K."/>
            <person name="Wong C."/>
            <person name="Yamamura Y."/>
            <person name="Yuan S."/>
            <person name="Shinozaki K."/>
            <person name="Davis R.W."/>
            <person name="Theologis A."/>
            <person name="Ecker J.R."/>
        </authorList>
    </citation>
    <scope>NUCLEOTIDE SEQUENCE [LARGE SCALE MRNA]</scope>
    <source>
        <strain>cv. Columbia</strain>
    </source>
</reference>
<reference key="4">
    <citation type="journal article" date="2002" name="Plant Mol. Biol.">
        <title>Genetics of Aux/IAA and ARF action in plant growth and development.</title>
        <authorList>
            <person name="Liscum E."/>
            <person name="Reed J.W."/>
        </authorList>
    </citation>
    <scope>GENE FAMILY</scope>
    <scope>NOMENCLATURE</scope>
    <scope>FUNCTION</scope>
</reference>
<reference key="5">
    <citation type="journal article" date="2004" name="Plant Cell">
        <title>Aux/IAA proteins contain a potent transcriptional repression domain.</title>
        <authorList>
            <person name="Tiwari S.B."/>
            <person name="Hagen G."/>
            <person name="Guilfoyle T.J."/>
        </authorList>
    </citation>
    <scope>TRANSCRIPTIONAL REPRESSION DOMAIN</scope>
</reference>
<gene>
    <name type="primary">IAA31</name>
    <name type="ordered locus">At3g17600</name>
    <name type="ORF">MKP6.16</name>
</gene>
<organism>
    <name type="scientific">Arabidopsis thaliana</name>
    <name type="common">Mouse-ear cress</name>
    <dbReference type="NCBI Taxonomy" id="3702"/>
    <lineage>
        <taxon>Eukaryota</taxon>
        <taxon>Viridiplantae</taxon>
        <taxon>Streptophyta</taxon>
        <taxon>Embryophyta</taxon>
        <taxon>Tracheophyta</taxon>
        <taxon>Spermatophyta</taxon>
        <taxon>Magnoliopsida</taxon>
        <taxon>eudicotyledons</taxon>
        <taxon>Gunneridae</taxon>
        <taxon>Pentapetalae</taxon>
        <taxon>rosids</taxon>
        <taxon>malvids</taxon>
        <taxon>Brassicales</taxon>
        <taxon>Brassicaceae</taxon>
        <taxon>Camelineae</taxon>
        <taxon>Arabidopsis</taxon>
    </lineage>
</organism>
<proteinExistence type="evidence at protein level"/>
<protein>
    <recommendedName>
        <fullName>Auxin-responsive protein IAA31</fullName>
    </recommendedName>
    <alternativeName>
        <fullName>Indoleacetic acid-induced protein 31</fullName>
    </alternativeName>
</protein>
<sequence>MEVSNSCSSFSSSSVDSTKPSPSESSVNLSLSLTFPSTSPQREARQDWPPIKSRLRDTLKGRRLLRRGDDTSLFVKVYMEGVPIGRKLDLCVFSGYESLLENLSHMFDTSIICGNRDRKHHVLTYEDKDGDWMMVGDIPWDMFLETVRRLKITRPERY</sequence>